<reference key="1">
    <citation type="journal article" date="2009" name="PLoS Pathog.">
        <title>Genomic evidence for the evolution of Streptococcus equi: host restriction, increased virulence, and genetic exchange with human pathogens.</title>
        <authorList>
            <person name="Holden M.T.G."/>
            <person name="Heather Z."/>
            <person name="Paillot R."/>
            <person name="Steward K.F."/>
            <person name="Webb K."/>
            <person name="Ainslie F."/>
            <person name="Jourdan T."/>
            <person name="Bason N.C."/>
            <person name="Holroyd N.E."/>
            <person name="Mungall K."/>
            <person name="Quail M.A."/>
            <person name="Sanders M."/>
            <person name="Simmonds M."/>
            <person name="Willey D."/>
            <person name="Brooks K."/>
            <person name="Aanensen D.M."/>
            <person name="Spratt B.G."/>
            <person name="Jolley K.A."/>
            <person name="Maiden M.C.J."/>
            <person name="Kehoe M."/>
            <person name="Chanter N."/>
            <person name="Bentley S.D."/>
            <person name="Robinson C."/>
            <person name="Maskell D.J."/>
            <person name="Parkhill J."/>
            <person name="Waller A.S."/>
        </authorList>
    </citation>
    <scope>NUCLEOTIDE SEQUENCE [LARGE SCALE GENOMIC DNA]</scope>
    <source>
        <strain>4047</strain>
    </source>
</reference>
<evidence type="ECO:0000255" key="1">
    <source>
        <dbReference type="HAMAP-Rule" id="MF_00555"/>
    </source>
</evidence>
<comment type="catalytic activity">
    <reaction evidence="1">
        <text>L-aspartate + NH4(+) + ATP = L-asparagine + AMP + diphosphate + H(+)</text>
        <dbReference type="Rhea" id="RHEA:11372"/>
        <dbReference type="ChEBI" id="CHEBI:15378"/>
        <dbReference type="ChEBI" id="CHEBI:28938"/>
        <dbReference type="ChEBI" id="CHEBI:29991"/>
        <dbReference type="ChEBI" id="CHEBI:30616"/>
        <dbReference type="ChEBI" id="CHEBI:33019"/>
        <dbReference type="ChEBI" id="CHEBI:58048"/>
        <dbReference type="ChEBI" id="CHEBI:456215"/>
        <dbReference type="EC" id="6.3.1.1"/>
    </reaction>
</comment>
<comment type="pathway">
    <text evidence="1">Amino-acid biosynthesis; L-asparagine biosynthesis; L-asparagine from L-aspartate (ammonia route): step 1/1.</text>
</comment>
<comment type="subcellular location">
    <subcellularLocation>
        <location evidence="1">Cytoplasm</location>
    </subcellularLocation>
</comment>
<comment type="similarity">
    <text evidence="1">Belongs to the class-II aminoacyl-tRNA synthetase family. AsnA subfamily.</text>
</comment>
<feature type="chain" id="PRO_1000146697" description="Aspartate--ammonia ligase">
    <location>
        <begin position="1"/>
        <end position="330"/>
    </location>
</feature>
<organism>
    <name type="scientific">Streptococcus equi subsp. equi (strain 4047)</name>
    <dbReference type="NCBI Taxonomy" id="553482"/>
    <lineage>
        <taxon>Bacteria</taxon>
        <taxon>Bacillati</taxon>
        <taxon>Bacillota</taxon>
        <taxon>Bacilli</taxon>
        <taxon>Lactobacillales</taxon>
        <taxon>Streptococcaceae</taxon>
        <taxon>Streptococcus</taxon>
    </lineage>
</organism>
<proteinExistence type="inferred from homology"/>
<keyword id="KW-0028">Amino-acid biosynthesis</keyword>
<keyword id="KW-0061">Asparagine biosynthesis</keyword>
<keyword id="KW-0067">ATP-binding</keyword>
<keyword id="KW-0963">Cytoplasm</keyword>
<keyword id="KW-0436">Ligase</keyword>
<keyword id="KW-0547">Nucleotide-binding</keyword>
<sequence length="330" mass="37578">MKKSFIHQQEEISFVKNTFTQYLIAKLDVVEVQGPILSRVGDGMQDNLSGVENPVSVHVLNIPNATFEVVHSLAKWKRHTLARFGFNEGEGLVVNMKALRPDEDSLDQTHSVYVDQWDWEKVIPDGQRNLAYLKETVETIYKVIRLTELAVEARYDIEAVLPKKITFIHTEELVARYPDLTPKERENAITKEFDAVFLIGIGGVLPDGKPHDGRAPDYDDWTSESENGYHGLNGDILVWNEQLGTAFELFSMGIRVDEEALKRQVDITGDQERLQFDWHKSLLNGLFPLTIGGGIGQSRMAMFLLRKKHIGEVQTSVWPQEVRDTYDNIL</sequence>
<protein>
    <recommendedName>
        <fullName evidence="1">Aspartate--ammonia ligase</fullName>
        <ecNumber evidence="1">6.3.1.1</ecNumber>
    </recommendedName>
    <alternativeName>
        <fullName evidence="1">Asparagine synthetase A</fullName>
    </alternativeName>
</protein>
<dbReference type="EC" id="6.3.1.1" evidence="1"/>
<dbReference type="EMBL" id="FM204883">
    <property type="protein sequence ID" value="CAW92893.1"/>
    <property type="molecule type" value="Genomic_DNA"/>
</dbReference>
<dbReference type="RefSeq" id="WP_012679158.1">
    <property type="nucleotide sequence ID" value="NC_012471.1"/>
</dbReference>
<dbReference type="SMR" id="C0MBY9"/>
<dbReference type="KEGG" id="seu:SEQ_0603"/>
<dbReference type="HOGENOM" id="CLU_071543_0_0_9"/>
<dbReference type="OrthoDB" id="9766088at2"/>
<dbReference type="UniPathway" id="UPA00134">
    <property type="reaction ID" value="UER00194"/>
</dbReference>
<dbReference type="Proteomes" id="UP000001365">
    <property type="component" value="Chromosome"/>
</dbReference>
<dbReference type="GO" id="GO:0005829">
    <property type="term" value="C:cytosol"/>
    <property type="evidence" value="ECO:0007669"/>
    <property type="project" value="TreeGrafter"/>
</dbReference>
<dbReference type="GO" id="GO:0004071">
    <property type="term" value="F:aspartate-ammonia ligase activity"/>
    <property type="evidence" value="ECO:0007669"/>
    <property type="project" value="UniProtKB-UniRule"/>
</dbReference>
<dbReference type="GO" id="GO:0005524">
    <property type="term" value="F:ATP binding"/>
    <property type="evidence" value="ECO:0007669"/>
    <property type="project" value="UniProtKB-UniRule"/>
</dbReference>
<dbReference type="GO" id="GO:0140096">
    <property type="term" value="F:catalytic activity, acting on a protein"/>
    <property type="evidence" value="ECO:0007669"/>
    <property type="project" value="UniProtKB-ARBA"/>
</dbReference>
<dbReference type="GO" id="GO:0016740">
    <property type="term" value="F:transferase activity"/>
    <property type="evidence" value="ECO:0007669"/>
    <property type="project" value="UniProtKB-ARBA"/>
</dbReference>
<dbReference type="GO" id="GO:0070981">
    <property type="term" value="P:L-asparagine biosynthetic process"/>
    <property type="evidence" value="ECO:0007669"/>
    <property type="project" value="UniProtKB-UniRule"/>
</dbReference>
<dbReference type="Gene3D" id="3.30.930.10">
    <property type="entry name" value="Bira Bifunctional Protein, Domain 2"/>
    <property type="match status" value="1"/>
</dbReference>
<dbReference type="HAMAP" id="MF_00555">
    <property type="entry name" value="AsnA"/>
    <property type="match status" value="1"/>
</dbReference>
<dbReference type="InterPro" id="IPR006195">
    <property type="entry name" value="aa-tRNA-synth_II"/>
</dbReference>
<dbReference type="InterPro" id="IPR045864">
    <property type="entry name" value="aa-tRNA-synth_II/BPL/LPL"/>
</dbReference>
<dbReference type="InterPro" id="IPR004618">
    <property type="entry name" value="AsnA"/>
</dbReference>
<dbReference type="NCBIfam" id="TIGR00669">
    <property type="entry name" value="asnA"/>
    <property type="match status" value="1"/>
</dbReference>
<dbReference type="PANTHER" id="PTHR30073">
    <property type="entry name" value="ASPARTATE--AMMONIA LIGASE"/>
    <property type="match status" value="1"/>
</dbReference>
<dbReference type="PANTHER" id="PTHR30073:SF5">
    <property type="entry name" value="ASPARTATE--AMMONIA LIGASE"/>
    <property type="match status" value="1"/>
</dbReference>
<dbReference type="Pfam" id="PF03590">
    <property type="entry name" value="AsnA"/>
    <property type="match status" value="1"/>
</dbReference>
<dbReference type="PIRSF" id="PIRSF001555">
    <property type="entry name" value="Asp_ammon_ligase"/>
    <property type="match status" value="1"/>
</dbReference>
<dbReference type="SUPFAM" id="SSF55681">
    <property type="entry name" value="Class II aaRS and biotin synthetases"/>
    <property type="match status" value="1"/>
</dbReference>
<dbReference type="PROSITE" id="PS50862">
    <property type="entry name" value="AA_TRNA_LIGASE_II"/>
    <property type="match status" value="1"/>
</dbReference>
<name>ASNA_STRE4</name>
<gene>
    <name evidence="1" type="primary">asnA</name>
    <name type="ordered locus">SEQ_0603</name>
</gene>
<accession>C0MBY9</accession>